<feature type="chain" id="PRO_0000069426" description="Lysophosphatidic acid receptor 2">
    <location>
        <begin position="1"/>
        <end position="348"/>
    </location>
</feature>
<feature type="topological domain" description="Extracellular" evidence="2">
    <location>
        <begin position="1"/>
        <end position="30"/>
    </location>
</feature>
<feature type="transmembrane region" description="Helical; Name=1" evidence="2">
    <location>
        <begin position="31"/>
        <end position="51"/>
    </location>
</feature>
<feature type="topological domain" description="Cytoplasmic" evidence="2">
    <location>
        <begin position="52"/>
        <end position="66"/>
    </location>
</feature>
<feature type="transmembrane region" description="Helical; Name=2" evidence="2">
    <location>
        <begin position="67"/>
        <end position="87"/>
    </location>
</feature>
<feature type="topological domain" description="Extracellular" evidence="2">
    <location>
        <begin position="88"/>
        <end position="104"/>
    </location>
</feature>
<feature type="transmembrane region" description="Helical; Name=3" evidence="2">
    <location>
        <begin position="105"/>
        <end position="124"/>
    </location>
</feature>
<feature type="topological domain" description="Cytoplasmic" evidence="2">
    <location>
        <begin position="125"/>
        <end position="144"/>
    </location>
</feature>
<feature type="transmembrane region" description="Helical; Name=4" evidence="2">
    <location>
        <begin position="145"/>
        <end position="165"/>
    </location>
</feature>
<feature type="topological domain" description="Extracellular" evidence="2">
    <location>
        <begin position="166"/>
        <end position="185"/>
    </location>
</feature>
<feature type="transmembrane region" description="Helical; Name=5" evidence="2">
    <location>
        <begin position="186"/>
        <end position="206"/>
    </location>
</feature>
<feature type="topological domain" description="Cytoplasmic" evidence="2">
    <location>
        <begin position="207"/>
        <end position="239"/>
    </location>
</feature>
<feature type="transmembrane region" description="Helical; Name=6" evidence="2">
    <location>
        <begin position="240"/>
        <end position="260"/>
    </location>
</feature>
<feature type="topological domain" description="Extracellular" evidence="2">
    <location>
        <begin position="261"/>
        <end position="270"/>
    </location>
</feature>
<feature type="transmembrane region" description="Helical; Name=7" evidence="2">
    <location>
        <begin position="271"/>
        <end position="291"/>
    </location>
</feature>
<feature type="topological domain" description="Cytoplasmic" evidence="2">
    <location>
        <begin position="292"/>
        <end position="348"/>
    </location>
</feature>
<feature type="short sequence motif" description="PDZ-binding">
    <location>
        <begin position="345"/>
        <end position="348"/>
    </location>
</feature>
<feature type="lipid moiety-binding region" description="S-palmitoyl cysteine" evidence="1">
    <location>
        <position position="308"/>
    </location>
</feature>
<feature type="glycosylation site" description="N-linked (GlcNAc...) asparagine" evidence="2">
    <location>
        <position position="7"/>
    </location>
</feature>
<feature type="glycosylation site" description="N-linked (GlcNAc...) asparagine" evidence="2">
    <location>
        <position position="15"/>
    </location>
</feature>
<feature type="sequence conflict" description="In Ref. 1; AAF65684." evidence="4" ref="1">
    <original>S</original>
    <variation>T</variation>
    <location>
        <position position="267"/>
    </location>
</feature>
<evidence type="ECO:0000250" key="1"/>
<evidence type="ECO:0000255" key="2"/>
<evidence type="ECO:0000255" key="3">
    <source>
        <dbReference type="PROSITE-ProRule" id="PRU00521"/>
    </source>
</evidence>
<evidence type="ECO:0000305" key="4"/>
<evidence type="ECO:0000312" key="5">
    <source>
        <dbReference type="MGI" id="MGI:1858422"/>
    </source>
</evidence>
<protein>
    <recommendedName>
        <fullName evidence="4">Lysophosphatidic acid receptor 2</fullName>
        <shortName>LPA receptor 2</shortName>
        <shortName>LPA-2</shortName>
    </recommendedName>
    <alternativeName>
        <fullName>Lysophosphatidic acid receptor Edg-4</fullName>
    </alternativeName>
</protein>
<name>LPAR2_MOUSE</name>
<reference key="1">
    <citation type="journal article" date="2000" name="Genomics">
        <title>Genomic characterization of the lysophosphatidic acid receptor gene, lp(A2)/Edg4, and identification of a frameshift mutation in a previously characterized cDNA.</title>
        <authorList>
            <person name="Contos J.J.A."/>
            <person name="Chun J."/>
        </authorList>
    </citation>
    <scope>NUCLEOTIDE SEQUENCE [GENOMIC DNA]</scope>
    <source>
        <strain>129/SvJ</strain>
    </source>
</reference>
<reference key="2">
    <citation type="journal article" date="2005" name="Science">
        <title>The transcriptional landscape of the mammalian genome.</title>
        <authorList>
            <person name="Carninci P."/>
            <person name="Kasukawa T."/>
            <person name="Katayama S."/>
            <person name="Gough J."/>
            <person name="Frith M.C."/>
            <person name="Maeda N."/>
            <person name="Oyama R."/>
            <person name="Ravasi T."/>
            <person name="Lenhard B."/>
            <person name="Wells C."/>
            <person name="Kodzius R."/>
            <person name="Shimokawa K."/>
            <person name="Bajic V.B."/>
            <person name="Brenner S.E."/>
            <person name="Batalov S."/>
            <person name="Forrest A.R."/>
            <person name="Zavolan M."/>
            <person name="Davis M.J."/>
            <person name="Wilming L.G."/>
            <person name="Aidinis V."/>
            <person name="Allen J.E."/>
            <person name="Ambesi-Impiombato A."/>
            <person name="Apweiler R."/>
            <person name="Aturaliya R.N."/>
            <person name="Bailey T.L."/>
            <person name="Bansal M."/>
            <person name="Baxter L."/>
            <person name="Beisel K.W."/>
            <person name="Bersano T."/>
            <person name="Bono H."/>
            <person name="Chalk A.M."/>
            <person name="Chiu K.P."/>
            <person name="Choudhary V."/>
            <person name="Christoffels A."/>
            <person name="Clutterbuck D.R."/>
            <person name="Crowe M.L."/>
            <person name="Dalla E."/>
            <person name="Dalrymple B.P."/>
            <person name="de Bono B."/>
            <person name="Della Gatta G."/>
            <person name="di Bernardo D."/>
            <person name="Down T."/>
            <person name="Engstrom P."/>
            <person name="Fagiolini M."/>
            <person name="Faulkner G."/>
            <person name="Fletcher C.F."/>
            <person name="Fukushima T."/>
            <person name="Furuno M."/>
            <person name="Futaki S."/>
            <person name="Gariboldi M."/>
            <person name="Georgii-Hemming P."/>
            <person name="Gingeras T.R."/>
            <person name="Gojobori T."/>
            <person name="Green R.E."/>
            <person name="Gustincich S."/>
            <person name="Harbers M."/>
            <person name="Hayashi Y."/>
            <person name="Hensch T.K."/>
            <person name="Hirokawa N."/>
            <person name="Hill D."/>
            <person name="Huminiecki L."/>
            <person name="Iacono M."/>
            <person name="Ikeo K."/>
            <person name="Iwama A."/>
            <person name="Ishikawa T."/>
            <person name="Jakt M."/>
            <person name="Kanapin A."/>
            <person name="Katoh M."/>
            <person name="Kawasawa Y."/>
            <person name="Kelso J."/>
            <person name="Kitamura H."/>
            <person name="Kitano H."/>
            <person name="Kollias G."/>
            <person name="Krishnan S.P."/>
            <person name="Kruger A."/>
            <person name="Kummerfeld S.K."/>
            <person name="Kurochkin I.V."/>
            <person name="Lareau L.F."/>
            <person name="Lazarevic D."/>
            <person name="Lipovich L."/>
            <person name="Liu J."/>
            <person name="Liuni S."/>
            <person name="McWilliam S."/>
            <person name="Madan Babu M."/>
            <person name="Madera M."/>
            <person name="Marchionni L."/>
            <person name="Matsuda H."/>
            <person name="Matsuzawa S."/>
            <person name="Miki H."/>
            <person name="Mignone F."/>
            <person name="Miyake S."/>
            <person name="Morris K."/>
            <person name="Mottagui-Tabar S."/>
            <person name="Mulder N."/>
            <person name="Nakano N."/>
            <person name="Nakauchi H."/>
            <person name="Ng P."/>
            <person name="Nilsson R."/>
            <person name="Nishiguchi S."/>
            <person name="Nishikawa S."/>
            <person name="Nori F."/>
            <person name="Ohara O."/>
            <person name="Okazaki Y."/>
            <person name="Orlando V."/>
            <person name="Pang K.C."/>
            <person name="Pavan W.J."/>
            <person name="Pavesi G."/>
            <person name="Pesole G."/>
            <person name="Petrovsky N."/>
            <person name="Piazza S."/>
            <person name="Reed J."/>
            <person name="Reid J.F."/>
            <person name="Ring B.Z."/>
            <person name="Ringwald M."/>
            <person name="Rost B."/>
            <person name="Ruan Y."/>
            <person name="Salzberg S.L."/>
            <person name="Sandelin A."/>
            <person name="Schneider C."/>
            <person name="Schoenbach C."/>
            <person name="Sekiguchi K."/>
            <person name="Semple C.A."/>
            <person name="Seno S."/>
            <person name="Sessa L."/>
            <person name="Sheng Y."/>
            <person name="Shibata Y."/>
            <person name="Shimada H."/>
            <person name="Shimada K."/>
            <person name="Silva D."/>
            <person name="Sinclair B."/>
            <person name="Sperling S."/>
            <person name="Stupka E."/>
            <person name="Sugiura K."/>
            <person name="Sultana R."/>
            <person name="Takenaka Y."/>
            <person name="Taki K."/>
            <person name="Tammoja K."/>
            <person name="Tan S.L."/>
            <person name="Tang S."/>
            <person name="Taylor M.S."/>
            <person name="Tegner J."/>
            <person name="Teichmann S.A."/>
            <person name="Ueda H.R."/>
            <person name="van Nimwegen E."/>
            <person name="Verardo R."/>
            <person name="Wei C.L."/>
            <person name="Yagi K."/>
            <person name="Yamanishi H."/>
            <person name="Zabarovsky E."/>
            <person name="Zhu S."/>
            <person name="Zimmer A."/>
            <person name="Hide W."/>
            <person name="Bult C."/>
            <person name="Grimmond S.M."/>
            <person name="Teasdale R.D."/>
            <person name="Liu E.T."/>
            <person name="Brusic V."/>
            <person name="Quackenbush J."/>
            <person name="Wahlestedt C."/>
            <person name="Mattick J.S."/>
            <person name="Hume D.A."/>
            <person name="Kai C."/>
            <person name="Sasaki D."/>
            <person name="Tomaru Y."/>
            <person name="Fukuda S."/>
            <person name="Kanamori-Katayama M."/>
            <person name="Suzuki M."/>
            <person name="Aoki J."/>
            <person name="Arakawa T."/>
            <person name="Iida J."/>
            <person name="Imamura K."/>
            <person name="Itoh M."/>
            <person name="Kato T."/>
            <person name="Kawaji H."/>
            <person name="Kawagashira N."/>
            <person name="Kawashima T."/>
            <person name="Kojima M."/>
            <person name="Kondo S."/>
            <person name="Konno H."/>
            <person name="Nakano K."/>
            <person name="Ninomiya N."/>
            <person name="Nishio T."/>
            <person name="Okada M."/>
            <person name="Plessy C."/>
            <person name="Shibata K."/>
            <person name="Shiraki T."/>
            <person name="Suzuki S."/>
            <person name="Tagami M."/>
            <person name="Waki K."/>
            <person name="Watahiki A."/>
            <person name="Okamura-Oho Y."/>
            <person name="Suzuki H."/>
            <person name="Kawai J."/>
            <person name="Hayashizaki Y."/>
        </authorList>
    </citation>
    <scope>NUCLEOTIDE SEQUENCE [LARGE SCALE MRNA]</scope>
    <source>
        <tissue>Lung</tissue>
    </source>
</reference>
<reference key="3">
    <citation type="journal article" date="2009" name="PLoS Biol.">
        <title>Lineage-specific biology revealed by a finished genome assembly of the mouse.</title>
        <authorList>
            <person name="Church D.M."/>
            <person name="Goodstadt L."/>
            <person name="Hillier L.W."/>
            <person name="Zody M.C."/>
            <person name="Goldstein S."/>
            <person name="She X."/>
            <person name="Bult C.J."/>
            <person name="Agarwala R."/>
            <person name="Cherry J.L."/>
            <person name="DiCuccio M."/>
            <person name="Hlavina W."/>
            <person name="Kapustin Y."/>
            <person name="Meric P."/>
            <person name="Maglott D."/>
            <person name="Birtle Z."/>
            <person name="Marques A.C."/>
            <person name="Graves T."/>
            <person name="Zhou S."/>
            <person name="Teague B."/>
            <person name="Potamousis K."/>
            <person name="Churas C."/>
            <person name="Place M."/>
            <person name="Herschleb J."/>
            <person name="Runnheim R."/>
            <person name="Forrest D."/>
            <person name="Amos-Landgraf J."/>
            <person name="Schwartz D.C."/>
            <person name="Cheng Z."/>
            <person name="Lindblad-Toh K."/>
            <person name="Eichler E.E."/>
            <person name="Ponting C.P."/>
        </authorList>
    </citation>
    <scope>NUCLEOTIDE SEQUENCE [LARGE SCALE GENOMIC DNA]</scope>
    <source>
        <strain>C57BL/6J</strain>
    </source>
</reference>
<reference key="4">
    <citation type="journal article" date="2004" name="Genome Res.">
        <title>The status, quality, and expansion of the NIH full-length cDNA project: the Mammalian Gene Collection (MGC).</title>
        <authorList>
            <consortium name="The MGC Project Team"/>
        </authorList>
    </citation>
    <scope>NUCLEOTIDE SEQUENCE [LARGE SCALE MRNA]</scope>
    <source>
        <strain>C57BL/6J</strain>
        <tissue>Brain</tissue>
    </source>
</reference>
<reference key="5">
    <citation type="journal article" date="2000" name="Mol. Pharmacol.">
        <title>Lysophosphatidic acid receptors.</title>
        <authorList>
            <person name="Contos J.J.A."/>
            <person name="Ishii I."/>
            <person name="Chun J."/>
        </authorList>
    </citation>
    <scope>REVIEW</scope>
</reference>
<gene>
    <name evidence="5" type="primary">Lpar2</name>
    <name type="synonym">Edg4</name>
    <name type="synonym">Lpa2</name>
</gene>
<organism>
    <name type="scientific">Mus musculus</name>
    <name type="common">Mouse</name>
    <dbReference type="NCBI Taxonomy" id="10090"/>
    <lineage>
        <taxon>Eukaryota</taxon>
        <taxon>Metazoa</taxon>
        <taxon>Chordata</taxon>
        <taxon>Craniata</taxon>
        <taxon>Vertebrata</taxon>
        <taxon>Euteleostomi</taxon>
        <taxon>Mammalia</taxon>
        <taxon>Eutheria</taxon>
        <taxon>Euarchontoglires</taxon>
        <taxon>Glires</taxon>
        <taxon>Rodentia</taxon>
        <taxon>Myomorpha</taxon>
        <taxon>Muroidea</taxon>
        <taxon>Muridae</taxon>
        <taxon>Murinae</taxon>
        <taxon>Mus</taxon>
        <taxon>Mus</taxon>
    </lineage>
</organism>
<proteinExistence type="evidence at transcript level"/>
<accession>Q9JL06</accession>
<accession>Q6P290</accession>
<sequence length="348" mass="39003">MGQCYYNETIGFFYNNSGKELSLHWRPKDVVVVALGLTVSVLVLLTNLLVIAAIASNRRFHQPIYYLLGNLAAADLFAGMAYLFLMFHTGPRTARLSIKGWFLRQGLLDTSLTASVATLLAIAVERHRSVMAVQLHSRLPRGRVVTLIVGVWAAALGLGLLPAHFWHCLCDLDSCSRMVPLFSRSYLAAWALSSLLVFLLMVAVYTRIFFYVRRRVERMAEHVSCHPRYRETTLSLVKTVVIILGAFVVCWTPGQVVLLLDGLDCKSCNVLAVEKYFLLLAEANSLVNAVVYSCRDAEMRRTFRRLLCCMCLRWSSHKSARYSASAQTGASTRIMLPENGRPLMDSTL</sequence>
<keyword id="KW-1003">Cell membrane</keyword>
<keyword id="KW-0297">G-protein coupled receptor</keyword>
<keyword id="KW-0325">Glycoprotein</keyword>
<keyword id="KW-0449">Lipoprotein</keyword>
<keyword id="KW-0472">Membrane</keyword>
<keyword id="KW-0564">Palmitate</keyword>
<keyword id="KW-0675">Receptor</keyword>
<keyword id="KW-1185">Reference proteome</keyword>
<keyword id="KW-0807">Transducer</keyword>
<keyword id="KW-0812">Transmembrane</keyword>
<keyword id="KW-1133">Transmembrane helix</keyword>
<comment type="function">
    <text evidence="1">Receptor for lysophosphatidic acid (LPA), a mediator of diverse cellular activities. Seems to be coupled to the G(i)/G(o), G(12)/G(13), and G(q) families of heteromeric G proteins. Plays a key role in phospholipase C-beta (PLC-beta) signaling pathway Stimulates phospholipase C (PLC) activity in a manner that is independent of RALA activation (By similarity).</text>
</comment>
<comment type="subunit">
    <text evidence="1">Interacts with SLC9A3R2/NHERF2, MAGI3 and PLCB3. Interacts with RALA and GRK2 (By similarity).</text>
</comment>
<comment type="subcellular location">
    <subcellularLocation>
        <location evidence="1">Cell surface</location>
    </subcellularLocation>
    <subcellularLocation>
        <location evidence="4">Cell membrane</location>
        <topology evidence="4">Multi-pass membrane protein</topology>
    </subcellularLocation>
    <text evidence="1">Prior to LPA treatment found predominantly at the cell surface but in the presence of LPA colocalizes with RALA in the endocytic vesicles.</text>
</comment>
<comment type="tissue specificity">
    <text>Most abundantly expressed in testes, kidney, and embryonic brain. Other organs also express the transcript, including heart, lung, spleen, thymus, stomach, and adult brain. Several have little or no expression, including liver, small intestine, and skeletal muscle.</text>
</comment>
<comment type="similarity">
    <text evidence="3">Belongs to the G-protein coupled receptor 1 family.</text>
</comment>
<comment type="sequence caution" evidence="4">
    <conflict type="frameshift">
        <sequence resource="EMBL-CDS" id="AAF65684"/>
    </conflict>
    <text>Several.</text>
</comment>
<dbReference type="EMBL" id="AF218844">
    <property type="protein sequence ID" value="AAF65684.1"/>
    <property type="status" value="ALT_FRAME"/>
    <property type="molecule type" value="Genomic_DNA"/>
</dbReference>
<dbReference type="EMBL" id="AK144861">
    <property type="protein sequence ID" value="BAE26107.1"/>
    <property type="molecule type" value="mRNA"/>
</dbReference>
<dbReference type="EMBL" id="BC060131">
    <property type="protein sequence ID" value="AAH60131.1"/>
    <property type="molecule type" value="mRNA"/>
</dbReference>
<dbReference type="EMBL" id="BC064676">
    <property type="protein sequence ID" value="AAH64676.1"/>
    <property type="molecule type" value="mRNA"/>
</dbReference>
<dbReference type="CCDS" id="CCDS40362.1"/>
<dbReference type="RefSeq" id="NP_064412.2">
    <property type="nucleotide sequence ID" value="NM_020028.3"/>
</dbReference>
<dbReference type="SMR" id="Q9JL06"/>
<dbReference type="FunCoup" id="Q9JL06">
    <property type="interactions" value="972"/>
</dbReference>
<dbReference type="IntAct" id="Q9JL06">
    <property type="interactions" value="2"/>
</dbReference>
<dbReference type="MINT" id="Q9JL06"/>
<dbReference type="STRING" id="10090.ENSMUSP00000034325"/>
<dbReference type="ChEMBL" id="CHEMBL4523464"/>
<dbReference type="GuidetoPHARMACOLOGY" id="273"/>
<dbReference type="GlyCosmos" id="Q9JL06">
    <property type="glycosylation" value="2 sites, No reported glycans"/>
</dbReference>
<dbReference type="GlyGen" id="Q9JL06">
    <property type="glycosylation" value="2 sites"/>
</dbReference>
<dbReference type="PhosphoSitePlus" id="Q9JL06"/>
<dbReference type="PaxDb" id="10090-ENSMUSP00000128261"/>
<dbReference type="ProteomicsDB" id="291960"/>
<dbReference type="ProteomicsDB" id="333080"/>
<dbReference type="Antibodypedia" id="15391">
    <property type="antibodies" value="336 antibodies from 33 providers"/>
</dbReference>
<dbReference type="Ensembl" id="ENSMUST00000034325.6">
    <property type="protein sequence ID" value="ENSMUSP00000034325.5"/>
    <property type="gene ID" value="ENSMUSG00000031861.17"/>
</dbReference>
<dbReference type="Ensembl" id="ENSMUST00000164890.8">
    <property type="protein sequence ID" value="ENSMUSP00000128261.2"/>
    <property type="gene ID" value="ENSMUSG00000031861.17"/>
</dbReference>
<dbReference type="GeneID" id="53978"/>
<dbReference type="KEGG" id="mmu:53978"/>
<dbReference type="UCSC" id="uc009lxv.1">
    <property type="organism name" value="mouse"/>
</dbReference>
<dbReference type="AGR" id="MGI:1858422"/>
<dbReference type="CTD" id="9170"/>
<dbReference type="MGI" id="MGI:1858422">
    <property type="gene designation" value="Lpar2"/>
</dbReference>
<dbReference type="VEuPathDB" id="HostDB:ENSMUSG00000031861"/>
<dbReference type="eggNOG" id="KOG3656">
    <property type="taxonomic scope" value="Eukaryota"/>
</dbReference>
<dbReference type="GeneTree" id="ENSGT01120000271896"/>
<dbReference type="HOGENOM" id="CLU_047979_0_0_1"/>
<dbReference type="InParanoid" id="Q9JL06"/>
<dbReference type="OMA" id="RTYLAVW"/>
<dbReference type="OrthoDB" id="5987098at2759"/>
<dbReference type="PhylomeDB" id="Q9JL06"/>
<dbReference type="TreeFam" id="TF330052"/>
<dbReference type="Reactome" id="R-MMU-416476">
    <property type="pathway name" value="G alpha (q) signalling events"/>
</dbReference>
<dbReference type="Reactome" id="R-MMU-418594">
    <property type="pathway name" value="G alpha (i) signalling events"/>
</dbReference>
<dbReference type="Reactome" id="R-MMU-419408">
    <property type="pathway name" value="Lysosphingolipid and LPA receptors"/>
</dbReference>
<dbReference type="BioGRID-ORCS" id="53978">
    <property type="hits" value="3 hits in 80 CRISPR screens"/>
</dbReference>
<dbReference type="PRO" id="PR:Q9JL06"/>
<dbReference type="Proteomes" id="UP000000589">
    <property type="component" value="Chromosome 8"/>
</dbReference>
<dbReference type="RNAct" id="Q9JL06">
    <property type="molecule type" value="protein"/>
</dbReference>
<dbReference type="Bgee" id="ENSMUSG00000031861">
    <property type="expression patterns" value="Expressed in remnant of Rathke's pouch and 131 other cell types or tissues"/>
</dbReference>
<dbReference type="GO" id="GO:0009986">
    <property type="term" value="C:cell surface"/>
    <property type="evidence" value="ECO:0000250"/>
    <property type="project" value="UniProtKB"/>
</dbReference>
<dbReference type="GO" id="GO:0030139">
    <property type="term" value="C:endocytic vesicle"/>
    <property type="evidence" value="ECO:0007669"/>
    <property type="project" value="Ensembl"/>
</dbReference>
<dbReference type="GO" id="GO:0098978">
    <property type="term" value="C:glutamatergic synapse"/>
    <property type="evidence" value="ECO:0000314"/>
    <property type="project" value="SynGO"/>
</dbReference>
<dbReference type="GO" id="GO:0048787">
    <property type="term" value="C:presynaptic active zone membrane"/>
    <property type="evidence" value="ECO:0000314"/>
    <property type="project" value="SynGO"/>
</dbReference>
<dbReference type="GO" id="GO:0070915">
    <property type="term" value="F:lysophosphatidic acid receptor activity"/>
    <property type="evidence" value="ECO:0007669"/>
    <property type="project" value="InterPro"/>
</dbReference>
<dbReference type="GO" id="GO:0030165">
    <property type="term" value="F:PDZ domain binding"/>
    <property type="evidence" value="ECO:0000353"/>
    <property type="project" value="MGI"/>
</dbReference>
<dbReference type="GO" id="GO:0007186">
    <property type="term" value="P:G protein-coupled receptor signaling pathway"/>
    <property type="evidence" value="ECO:0000314"/>
    <property type="project" value="MGI"/>
</dbReference>
<dbReference type="GO" id="GO:0043410">
    <property type="term" value="P:positive regulation of MAPK cascade"/>
    <property type="evidence" value="ECO:0000314"/>
    <property type="project" value="MGI"/>
</dbReference>
<dbReference type="GO" id="GO:0035025">
    <property type="term" value="P:positive regulation of Rho protein signal transduction"/>
    <property type="evidence" value="ECO:0000314"/>
    <property type="project" value="MGI"/>
</dbReference>
<dbReference type="FunFam" id="1.20.1070.10:FF:000025">
    <property type="entry name" value="Lysophosphatidic acid receptor 1"/>
    <property type="match status" value="1"/>
</dbReference>
<dbReference type="Gene3D" id="1.20.1070.10">
    <property type="entry name" value="Rhodopsin 7-helix transmembrane proteins"/>
    <property type="match status" value="1"/>
</dbReference>
<dbReference type="InterPro" id="IPR000276">
    <property type="entry name" value="GPCR_Rhodpsn"/>
</dbReference>
<dbReference type="InterPro" id="IPR017452">
    <property type="entry name" value="GPCR_Rhodpsn_7TM"/>
</dbReference>
<dbReference type="InterPro" id="IPR004065">
    <property type="entry name" value="LPA_rcpt"/>
</dbReference>
<dbReference type="InterPro" id="IPR004066">
    <property type="entry name" value="LPA_rcpt_EDG4"/>
</dbReference>
<dbReference type="PANTHER" id="PTHR22750">
    <property type="entry name" value="G-PROTEIN COUPLED RECEPTOR"/>
    <property type="match status" value="1"/>
</dbReference>
<dbReference type="Pfam" id="PF00001">
    <property type="entry name" value="7tm_1"/>
    <property type="match status" value="1"/>
</dbReference>
<dbReference type="PRINTS" id="PR01528">
    <property type="entry name" value="EDG4RECEPTOR"/>
</dbReference>
<dbReference type="PRINTS" id="PR00237">
    <property type="entry name" value="GPCRRHODOPSN"/>
</dbReference>
<dbReference type="PRINTS" id="PR01527">
    <property type="entry name" value="LPARECEPTOR"/>
</dbReference>
<dbReference type="SMART" id="SM01381">
    <property type="entry name" value="7TM_GPCR_Srsx"/>
    <property type="match status" value="1"/>
</dbReference>
<dbReference type="SUPFAM" id="SSF81321">
    <property type="entry name" value="Family A G protein-coupled receptor-like"/>
    <property type="match status" value="1"/>
</dbReference>
<dbReference type="PROSITE" id="PS00237">
    <property type="entry name" value="G_PROTEIN_RECEP_F1_1"/>
    <property type="match status" value="1"/>
</dbReference>
<dbReference type="PROSITE" id="PS50262">
    <property type="entry name" value="G_PROTEIN_RECEP_F1_2"/>
    <property type="match status" value="1"/>
</dbReference>